<proteinExistence type="inferred from homology"/>
<dbReference type="EC" id="6.3.5.2" evidence="1"/>
<dbReference type="EMBL" id="CP000577">
    <property type="protein sequence ID" value="ABN76745.1"/>
    <property type="molecule type" value="Genomic_DNA"/>
</dbReference>
<dbReference type="RefSeq" id="WP_002720148.1">
    <property type="nucleotide sequence ID" value="NC_009049.1"/>
</dbReference>
<dbReference type="SMR" id="A3PK79"/>
<dbReference type="MEROPS" id="C26.957"/>
<dbReference type="KEGG" id="rsh:Rsph17029_1635"/>
<dbReference type="HOGENOM" id="CLU_014340_0_5_5"/>
<dbReference type="UniPathway" id="UPA00189">
    <property type="reaction ID" value="UER00296"/>
</dbReference>
<dbReference type="GO" id="GO:0005829">
    <property type="term" value="C:cytosol"/>
    <property type="evidence" value="ECO:0007669"/>
    <property type="project" value="TreeGrafter"/>
</dbReference>
<dbReference type="GO" id="GO:0005524">
    <property type="term" value="F:ATP binding"/>
    <property type="evidence" value="ECO:0007669"/>
    <property type="project" value="UniProtKB-UniRule"/>
</dbReference>
<dbReference type="GO" id="GO:0003921">
    <property type="term" value="F:GMP synthase activity"/>
    <property type="evidence" value="ECO:0007669"/>
    <property type="project" value="InterPro"/>
</dbReference>
<dbReference type="CDD" id="cd01742">
    <property type="entry name" value="GATase1_GMP_Synthase"/>
    <property type="match status" value="1"/>
</dbReference>
<dbReference type="CDD" id="cd01997">
    <property type="entry name" value="GMP_synthase_C"/>
    <property type="match status" value="1"/>
</dbReference>
<dbReference type="FunFam" id="3.30.300.10:FF:000002">
    <property type="entry name" value="GMP synthase [glutamine-hydrolyzing]"/>
    <property type="match status" value="1"/>
</dbReference>
<dbReference type="FunFam" id="3.40.50.620:FF:000001">
    <property type="entry name" value="GMP synthase [glutamine-hydrolyzing]"/>
    <property type="match status" value="1"/>
</dbReference>
<dbReference type="FunFam" id="3.40.50.880:FF:000001">
    <property type="entry name" value="GMP synthase [glutamine-hydrolyzing]"/>
    <property type="match status" value="1"/>
</dbReference>
<dbReference type="Gene3D" id="3.30.300.10">
    <property type="match status" value="1"/>
</dbReference>
<dbReference type="Gene3D" id="3.40.50.880">
    <property type="match status" value="1"/>
</dbReference>
<dbReference type="Gene3D" id="3.40.50.620">
    <property type="entry name" value="HUPs"/>
    <property type="match status" value="1"/>
</dbReference>
<dbReference type="HAMAP" id="MF_00344">
    <property type="entry name" value="GMP_synthase"/>
    <property type="match status" value="1"/>
</dbReference>
<dbReference type="InterPro" id="IPR029062">
    <property type="entry name" value="Class_I_gatase-like"/>
</dbReference>
<dbReference type="InterPro" id="IPR017926">
    <property type="entry name" value="GATASE"/>
</dbReference>
<dbReference type="InterPro" id="IPR001674">
    <property type="entry name" value="GMP_synth_C"/>
</dbReference>
<dbReference type="InterPro" id="IPR004739">
    <property type="entry name" value="GMP_synth_GATase"/>
</dbReference>
<dbReference type="InterPro" id="IPR022955">
    <property type="entry name" value="GMP_synthase"/>
</dbReference>
<dbReference type="InterPro" id="IPR025777">
    <property type="entry name" value="GMPS_ATP_PPase_dom"/>
</dbReference>
<dbReference type="InterPro" id="IPR022310">
    <property type="entry name" value="NAD/GMP_synthase"/>
</dbReference>
<dbReference type="InterPro" id="IPR014729">
    <property type="entry name" value="Rossmann-like_a/b/a_fold"/>
</dbReference>
<dbReference type="NCBIfam" id="TIGR00884">
    <property type="entry name" value="guaA_Cterm"/>
    <property type="match status" value="1"/>
</dbReference>
<dbReference type="NCBIfam" id="TIGR00888">
    <property type="entry name" value="guaA_Nterm"/>
    <property type="match status" value="1"/>
</dbReference>
<dbReference type="NCBIfam" id="NF000848">
    <property type="entry name" value="PRK00074.1"/>
    <property type="match status" value="1"/>
</dbReference>
<dbReference type="PANTHER" id="PTHR11922:SF2">
    <property type="entry name" value="GMP SYNTHASE [GLUTAMINE-HYDROLYZING]"/>
    <property type="match status" value="1"/>
</dbReference>
<dbReference type="PANTHER" id="PTHR11922">
    <property type="entry name" value="GMP SYNTHASE-RELATED"/>
    <property type="match status" value="1"/>
</dbReference>
<dbReference type="Pfam" id="PF00117">
    <property type="entry name" value="GATase"/>
    <property type="match status" value="1"/>
</dbReference>
<dbReference type="Pfam" id="PF00958">
    <property type="entry name" value="GMP_synt_C"/>
    <property type="match status" value="1"/>
</dbReference>
<dbReference type="Pfam" id="PF02540">
    <property type="entry name" value="NAD_synthase"/>
    <property type="match status" value="1"/>
</dbReference>
<dbReference type="PRINTS" id="PR00097">
    <property type="entry name" value="ANTSNTHASEII"/>
</dbReference>
<dbReference type="PRINTS" id="PR00096">
    <property type="entry name" value="GATASE"/>
</dbReference>
<dbReference type="SUPFAM" id="SSF52402">
    <property type="entry name" value="Adenine nucleotide alpha hydrolases-like"/>
    <property type="match status" value="1"/>
</dbReference>
<dbReference type="SUPFAM" id="SSF52317">
    <property type="entry name" value="Class I glutamine amidotransferase-like"/>
    <property type="match status" value="1"/>
</dbReference>
<dbReference type="SUPFAM" id="SSF54810">
    <property type="entry name" value="GMP synthetase C-terminal dimerisation domain"/>
    <property type="match status" value="1"/>
</dbReference>
<dbReference type="PROSITE" id="PS51273">
    <property type="entry name" value="GATASE_TYPE_1"/>
    <property type="match status" value="1"/>
</dbReference>
<dbReference type="PROSITE" id="PS51553">
    <property type="entry name" value="GMPS_ATP_PPASE"/>
    <property type="match status" value="1"/>
</dbReference>
<protein>
    <recommendedName>
        <fullName evidence="1">GMP synthase [glutamine-hydrolyzing]</fullName>
        <ecNumber evidence="1">6.3.5.2</ecNumber>
    </recommendedName>
    <alternativeName>
        <fullName evidence="1">GMP synthetase</fullName>
    </alternativeName>
    <alternativeName>
        <fullName evidence="1">Glutamine amidotransferase</fullName>
    </alternativeName>
</protein>
<gene>
    <name evidence="1" type="primary">guaA</name>
    <name type="ordered locus">Rsph17029_1635</name>
</gene>
<organism>
    <name type="scientific">Cereibacter sphaeroides (strain ATCC 17029 / ATH 2.4.9)</name>
    <name type="common">Rhodobacter sphaeroides</name>
    <dbReference type="NCBI Taxonomy" id="349101"/>
    <lineage>
        <taxon>Bacteria</taxon>
        <taxon>Pseudomonadati</taxon>
        <taxon>Pseudomonadota</taxon>
        <taxon>Alphaproteobacteria</taxon>
        <taxon>Rhodobacterales</taxon>
        <taxon>Paracoccaceae</taxon>
        <taxon>Cereibacter</taxon>
    </lineage>
</organism>
<name>GUAA_CERS1</name>
<accession>A3PK79</accession>
<keyword id="KW-0067">ATP-binding</keyword>
<keyword id="KW-0315">Glutamine amidotransferase</keyword>
<keyword id="KW-0332">GMP biosynthesis</keyword>
<keyword id="KW-0436">Ligase</keyword>
<keyword id="KW-0547">Nucleotide-binding</keyword>
<keyword id="KW-0658">Purine biosynthesis</keyword>
<feature type="chain" id="PRO_1000120383" description="GMP synthase [glutamine-hydrolyzing]">
    <location>
        <begin position="1"/>
        <end position="518"/>
    </location>
</feature>
<feature type="domain" description="Glutamine amidotransferase type-1" evidence="1">
    <location>
        <begin position="6"/>
        <end position="200"/>
    </location>
</feature>
<feature type="domain" description="GMPS ATP-PPase" evidence="1">
    <location>
        <begin position="201"/>
        <end position="393"/>
    </location>
</feature>
<feature type="active site" description="Nucleophile" evidence="1">
    <location>
        <position position="84"/>
    </location>
</feature>
<feature type="active site" evidence="1">
    <location>
        <position position="175"/>
    </location>
</feature>
<feature type="active site" evidence="1">
    <location>
        <position position="177"/>
    </location>
</feature>
<feature type="binding site" evidence="1">
    <location>
        <begin position="228"/>
        <end position="234"/>
    </location>
    <ligand>
        <name>ATP</name>
        <dbReference type="ChEBI" id="CHEBI:30616"/>
    </ligand>
</feature>
<reference key="1">
    <citation type="submission" date="2007-02" db="EMBL/GenBank/DDBJ databases">
        <title>Complete sequence of chromosome 1 of Rhodobacter sphaeroides ATCC 17029.</title>
        <authorList>
            <person name="Copeland A."/>
            <person name="Lucas S."/>
            <person name="Lapidus A."/>
            <person name="Barry K."/>
            <person name="Detter J.C."/>
            <person name="Glavina del Rio T."/>
            <person name="Hammon N."/>
            <person name="Israni S."/>
            <person name="Dalin E."/>
            <person name="Tice H."/>
            <person name="Pitluck S."/>
            <person name="Kiss H."/>
            <person name="Brettin T."/>
            <person name="Bruce D."/>
            <person name="Han C."/>
            <person name="Tapia R."/>
            <person name="Gilna P."/>
            <person name="Schmutz J."/>
            <person name="Larimer F."/>
            <person name="Land M."/>
            <person name="Hauser L."/>
            <person name="Kyrpides N."/>
            <person name="Mikhailova N."/>
            <person name="Richardson P."/>
            <person name="Mackenzie C."/>
            <person name="Choudhary M."/>
            <person name="Donohue T.J."/>
            <person name="Kaplan S."/>
        </authorList>
    </citation>
    <scope>NUCLEOTIDE SEQUENCE [LARGE SCALE GENOMIC DNA]</scope>
    <source>
        <strain>ATCC 17029 / ATH 2.4.9</strain>
    </source>
</reference>
<sequence length="518" mass="56985">MTQHDRLLIIDFGSQVTQLIARRLRELNVYCEIHPYQNVTEAFLKGFAPKAVIFSGGPSSVFAEGAPMPPAGVFDLGVPILGICYGQQVMMHCLGGKVERGHGTAEFGRAFVTPTAERLAILDGWFEEGREQVWMSHGDHVSQIAPGFQVFGTSPNAPFAITGDPARHFYAVQFHPEVHHTPKGAKLYENFVRLAGFKGDWTMGAYREEAIARIRAQVGDQKVICGLSGGVDSSVAAVLIHEAIGDQLTCVFVDHGLLRLGEAEQVVTMFRDHYNMPLIHADESDLFLGALEGVSDPEVKRKTIGRLFIDVFQKHAADVGGATFLAQGTLYPDVIESVSFSGGPSVTIKSHHNVGGLPEKMGLKLVEPLRELFKDEVRALGRELGLPESFIGRHPFPGPGLAIRCPGEITREKLEILRRADAVYIDQIRRHGLYDEIWQAFVALLPVRTVGVMGDGRTYDYACALRAVTSVDGMTADYYPFTHDFLGETATRIINEVQGINRVTYDITSKPPGTIEWE</sequence>
<comment type="function">
    <text evidence="1">Catalyzes the synthesis of GMP from XMP.</text>
</comment>
<comment type="catalytic activity">
    <reaction evidence="1">
        <text>XMP + L-glutamine + ATP + H2O = GMP + L-glutamate + AMP + diphosphate + 2 H(+)</text>
        <dbReference type="Rhea" id="RHEA:11680"/>
        <dbReference type="ChEBI" id="CHEBI:15377"/>
        <dbReference type="ChEBI" id="CHEBI:15378"/>
        <dbReference type="ChEBI" id="CHEBI:29985"/>
        <dbReference type="ChEBI" id="CHEBI:30616"/>
        <dbReference type="ChEBI" id="CHEBI:33019"/>
        <dbReference type="ChEBI" id="CHEBI:57464"/>
        <dbReference type="ChEBI" id="CHEBI:58115"/>
        <dbReference type="ChEBI" id="CHEBI:58359"/>
        <dbReference type="ChEBI" id="CHEBI:456215"/>
        <dbReference type="EC" id="6.3.5.2"/>
    </reaction>
</comment>
<comment type="pathway">
    <text evidence="1">Purine metabolism; GMP biosynthesis; GMP from XMP (L-Gln route): step 1/1.</text>
</comment>
<comment type="subunit">
    <text evidence="1">Homodimer.</text>
</comment>
<evidence type="ECO:0000255" key="1">
    <source>
        <dbReference type="HAMAP-Rule" id="MF_00344"/>
    </source>
</evidence>